<organism>
    <name type="scientific">Buchnera aphidicola subsp. Acyrthosiphon pisum (strain 5A)</name>
    <dbReference type="NCBI Taxonomy" id="563178"/>
    <lineage>
        <taxon>Bacteria</taxon>
        <taxon>Pseudomonadati</taxon>
        <taxon>Pseudomonadota</taxon>
        <taxon>Gammaproteobacteria</taxon>
        <taxon>Enterobacterales</taxon>
        <taxon>Erwiniaceae</taxon>
        <taxon>Buchnera</taxon>
    </lineage>
</organism>
<keyword id="KW-0687">Ribonucleoprotein</keyword>
<keyword id="KW-0689">Ribosomal protein</keyword>
<keyword id="KW-0694">RNA-binding</keyword>
<keyword id="KW-0699">rRNA-binding</keyword>
<comment type="function">
    <text evidence="1">Binds to 23S rRNA. Forms part of two intersubunit bridges in the 70S ribosome.</text>
</comment>
<comment type="subunit">
    <text evidence="1">Part of the 50S ribosomal subunit. Forms a cluster with proteins L3 and L19. In the 70S ribosome, L14 and L19 interact and together make contacts with the 16S rRNA in bridges B5 and B8.</text>
</comment>
<comment type="similarity">
    <text evidence="1">Belongs to the universal ribosomal protein uL14 family.</text>
</comment>
<sequence>MIQEQTILHVADNSGARSAMCIKVLGGSRRRYAAIGDVIKITIKEAIPRGKVKKGEVLKAVVVRTKKGVRRSDGSVIRFDTNACVVLNNNEQPIGTRIFGPVTRELRTEKFMKIISLAPEVL</sequence>
<dbReference type="EMBL" id="CP001161">
    <property type="protein sequence ID" value="ACL30858.1"/>
    <property type="molecule type" value="Genomic_DNA"/>
</dbReference>
<dbReference type="RefSeq" id="WP_009874465.1">
    <property type="nucleotide sequence ID" value="NC_011833.1"/>
</dbReference>
<dbReference type="SMR" id="B8D9T7"/>
<dbReference type="KEGG" id="bap:BUAP5A_507"/>
<dbReference type="HOGENOM" id="CLU_095071_2_1_6"/>
<dbReference type="OrthoDB" id="9806379at2"/>
<dbReference type="Proteomes" id="UP000006904">
    <property type="component" value="Chromosome"/>
</dbReference>
<dbReference type="GO" id="GO:0022625">
    <property type="term" value="C:cytosolic large ribosomal subunit"/>
    <property type="evidence" value="ECO:0007669"/>
    <property type="project" value="TreeGrafter"/>
</dbReference>
<dbReference type="GO" id="GO:0070180">
    <property type="term" value="F:large ribosomal subunit rRNA binding"/>
    <property type="evidence" value="ECO:0007669"/>
    <property type="project" value="TreeGrafter"/>
</dbReference>
<dbReference type="GO" id="GO:0003735">
    <property type="term" value="F:structural constituent of ribosome"/>
    <property type="evidence" value="ECO:0007669"/>
    <property type="project" value="InterPro"/>
</dbReference>
<dbReference type="GO" id="GO:0006412">
    <property type="term" value="P:translation"/>
    <property type="evidence" value="ECO:0007669"/>
    <property type="project" value="UniProtKB-UniRule"/>
</dbReference>
<dbReference type="CDD" id="cd00337">
    <property type="entry name" value="Ribosomal_uL14"/>
    <property type="match status" value="1"/>
</dbReference>
<dbReference type="FunFam" id="2.40.150.20:FF:000001">
    <property type="entry name" value="50S ribosomal protein L14"/>
    <property type="match status" value="1"/>
</dbReference>
<dbReference type="Gene3D" id="2.40.150.20">
    <property type="entry name" value="Ribosomal protein L14"/>
    <property type="match status" value="1"/>
</dbReference>
<dbReference type="HAMAP" id="MF_01367">
    <property type="entry name" value="Ribosomal_uL14"/>
    <property type="match status" value="1"/>
</dbReference>
<dbReference type="InterPro" id="IPR000218">
    <property type="entry name" value="Ribosomal_uL14"/>
</dbReference>
<dbReference type="InterPro" id="IPR005745">
    <property type="entry name" value="Ribosomal_uL14_bac-type"/>
</dbReference>
<dbReference type="InterPro" id="IPR019972">
    <property type="entry name" value="Ribosomal_uL14_CS"/>
</dbReference>
<dbReference type="InterPro" id="IPR036853">
    <property type="entry name" value="Ribosomal_uL14_sf"/>
</dbReference>
<dbReference type="NCBIfam" id="TIGR01067">
    <property type="entry name" value="rplN_bact"/>
    <property type="match status" value="1"/>
</dbReference>
<dbReference type="PANTHER" id="PTHR11761">
    <property type="entry name" value="50S/60S RIBOSOMAL PROTEIN L14/L23"/>
    <property type="match status" value="1"/>
</dbReference>
<dbReference type="PANTHER" id="PTHR11761:SF3">
    <property type="entry name" value="LARGE RIBOSOMAL SUBUNIT PROTEIN UL14M"/>
    <property type="match status" value="1"/>
</dbReference>
<dbReference type="Pfam" id="PF00238">
    <property type="entry name" value="Ribosomal_L14"/>
    <property type="match status" value="1"/>
</dbReference>
<dbReference type="SMART" id="SM01374">
    <property type="entry name" value="Ribosomal_L14"/>
    <property type="match status" value="1"/>
</dbReference>
<dbReference type="SUPFAM" id="SSF50193">
    <property type="entry name" value="Ribosomal protein L14"/>
    <property type="match status" value="1"/>
</dbReference>
<dbReference type="PROSITE" id="PS00049">
    <property type="entry name" value="RIBOSOMAL_L14"/>
    <property type="match status" value="1"/>
</dbReference>
<gene>
    <name evidence="1" type="primary">rplN</name>
    <name type="ordered locus">BUAP5A_507</name>
</gene>
<reference key="1">
    <citation type="journal article" date="2009" name="Science">
        <title>The dynamics and time scale of ongoing genomic erosion in symbiotic bacteria.</title>
        <authorList>
            <person name="Moran N.A."/>
            <person name="McLaughlin H.J."/>
            <person name="Sorek R."/>
        </authorList>
    </citation>
    <scope>NUCLEOTIDE SEQUENCE [LARGE SCALE GENOMIC DNA]</scope>
    <source>
        <strain>5A</strain>
    </source>
</reference>
<name>RL14_BUCA5</name>
<protein>
    <recommendedName>
        <fullName evidence="1">Large ribosomal subunit protein uL14</fullName>
    </recommendedName>
    <alternativeName>
        <fullName evidence="2">50S ribosomal protein L14</fullName>
    </alternativeName>
</protein>
<evidence type="ECO:0000255" key="1">
    <source>
        <dbReference type="HAMAP-Rule" id="MF_01367"/>
    </source>
</evidence>
<evidence type="ECO:0000305" key="2"/>
<accession>B8D9T7</accession>
<proteinExistence type="inferred from homology"/>
<feature type="chain" id="PRO_1000166905" description="Large ribosomal subunit protein uL14">
    <location>
        <begin position="1"/>
        <end position="122"/>
    </location>
</feature>